<comment type="function">
    <text evidence="1">Catalyzes the condensation of carbamoyl phosphate and aspartate to form carbamoyl aspartate and inorganic phosphate, the committed step in the de novo pyrimidine nucleotide biosynthesis pathway.</text>
</comment>
<comment type="catalytic activity">
    <reaction evidence="1">
        <text>carbamoyl phosphate + L-aspartate = N-carbamoyl-L-aspartate + phosphate + H(+)</text>
        <dbReference type="Rhea" id="RHEA:20013"/>
        <dbReference type="ChEBI" id="CHEBI:15378"/>
        <dbReference type="ChEBI" id="CHEBI:29991"/>
        <dbReference type="ChEBI" id="CHEBI:32814"/>
        <dbReference type="ChEBI" id="CHEBI:43474"/>
        <dbReference type="ChEBI" id="CHEBI:58228"/>
        <dbReference type="EC" id="2.1.3.2"/>
    </reaction>
</comment>
<comment type="pathway">
    <text evidence="1">Pyrimidine metabolism; UMP biosynthesis via de novo pathway; (S)-dihydroorotate from bicarbonate: step 2/3.</text>
</comment>
<comment type="subunit">
    <text evidence="1">Heterododecamer (2C3:3R2) of six catalytic PyrB chains organized as two trimers (C3), and six regulatory PyrI chains organized as three dimers (R2).</text>
</comment>
<comment type="similarity">
    <text evidence="1">Belongs to the aspartate/ornithine carbamoyltransferase superfamily. ATCase family.</text>
</comment>
<protein>
    <recommendedName>
        <fullName evidence="1">Aspartate carbamoyltransferase catalytic subunit</fullName>
        <ecNumber evidence="1">2.1.3.2</ecNumber>
    </recommendedName>
    <alternativeName>
        <fullName evidence="1">Aspartate transcarbamylase</fullName>
        <shortName evidence="1">ATCase</shortName>
    </alternativeName>
</protein>
<evidence type="ECO:0000255" key="1">
    <source>
        <dbReference type="HAMAP-Rule" id="MF_00001"/>
    </source>
</evidence>
<accession>B9JDM0</accession>
<organism>
    <name type="scientific">Rhizobium rhizogenes (strain K84 / ATCC BAA-868)</name>
    <name type="common">Agrobacterium radiobacter</name>
    <dbReference type="NCBI Taxonomy" id="311403"/>
    <lineage>
        <taxon>Bacteria</taxon>
        <taxon>Pseudomonadati</taxon>
        <taxon>Pseudomonadota</taxon>
        <taxon>Alphaproteobacteria</taxon>
        <taxon>Hyphomicrobiales</taxon>
        <taxon>Rhizobiaceae</taxon>
        <taxon>Rhizobium/Agrobacterium group</taxon>
        <taxon>Rhizobium</taxon>
    </lineage>
</organism>
<sequence>MVFFPHRHLIGIKGLTEQDITYLLDKADEAVKISRQREKKTSTLRGLTQINLFFEASTRTQASFELAGKRLGADVMNMSVGNSSVKKGETLIDTAMTLNAMRPDVLVIRHSSAGAAALLAQKVSCSVVNAGDGQHEHPTQALLDALTIRRAKGKLSRIIVAICGDVLHSRVARSNILLLNAMGARVRVVAPATLLPAGIADMGVEVFHSMKEGLKDADVVMMLRLQRERMSGAFVPSVREYYHFYGLDAETLKAAKEDALVMHPGPMNRGVEIASEVADGPQSVIAEQVEMGVAVRMAVMETLLVSQNQGPRTEGAGA</sequence>
<proteinExistence type="inferred from homology"/>
<reference key="1">
    <citation type="journal article" date="2009" name="J. Bacteriol.">
        <title>Genome sequences of three Agrobacterium biovars help elucidate the evolution of multichromosome genomes in bacteria.</title>
        <authorList>
            <person name="Slater S.C."/>
            <person name="Goldman B.S."/>
            <person name="Goodner B."/>
            <person name="Setubal J.C."/>
            <person name="Farrand S.K."/>
            <person name="Nester E.W."/>
            <person name="Burr T.J."/>
            <person name="Banta L."/>
            <person name="Dickerman A.W."/>
            <person name="Paulsen I."/>
            <person name="Otten L."/>
            <person name="Suen G."/>
            <person name="Welch R."/>
            <person name="Almeida N.F."/>
            <person name="Arnold F."/>
            <person name="Burton O.T."/>
            <person name="Du Z."/>
            <person name="Ewing A."/>
            <person name="Godsy E."/>
            <person name="Heisel S."/>
            <person name="Houmiel K.L."/>
            <person name="Jhaveri J."/>
            <person name="Lu J."/>
            <person name="Miller N.M."/>
            <person name="Norton S."/>
            <person name="Chen Q."/>
            <person name="Phoolcharoen W."/>
            <person name="Ohlin V."/>
            <person name="Ondrusek D."/>
            <person name="Pride N."/>
            <person name="Stricklin S.L."/>
            <person name="Sun J."/>
            <person name="Wheeler C."/>
            <person name="Wilson L."/>
            <person name="Zhu H."/>
            <person name="Wood D.W."/>
        </authorList>
    </citation>
    <scope>NUCLEOTIDE SEQUENCE [LARGE SCALE GENOMIC DNA]</scope>
    <source>
        <strain>K84 / ATCC BAA-868</strain>
    </source>
</reference>
<dbReference type="EC" id="2.1.3.2" evidence="1"/>
<dbReference type="EMBL" id="CP000628">
    <property type="protein sequence ID" value="ACM26221.1"/>
    <property type="molecule type" value="Genomic_DNA"/>
</dbReference>
<dbReference type="RefSeq" id="WP_007692028.1">
    <property type="nucleotide sequence ID" value="NC_011985.1"/>
</dbReference>
<dbReference type="SMR" id="B9JDM0"/>
<dbReference type="STRING" id="311403.Arad_1897"/>
<dbReference type="KEGG" id="ara:Arad_1897"/>
<dbReference type="eggNOG" id="COG0540">
    <property type="taxonomic scope" value="Bacteria"/>
</dbReference>
<dbReference type="HOGENOM" id="CLU_043846_2_0_5"/>
<dbReference type="UniPathway" id="UPA00070">
    <property type="reaction ID" value="UER00116"/>
</dbReference>
<dbReference type="Proteomes" id="UP000001600">
    <property type="component" value="Chromosome 1"/>
</dbReference>
<dbReference type="GO" id="GO:0005829">
    <property type="term" value="C:cytosol"/>
    <property type="evidence" value="ECO:0007669"/>
    <property type="project" value="TreeGrafter"/>
</dbReference>
<dbReference type="GO" id="GO:0016597">
    <property type="term" value="F:amino acid binding"/>
    <property type="evidence" value="ECO:0007669"/>
    <property type="project" value="InterPro"/>
</dbReference>
<dbReference type="GO" id="GO:0004070">
    <property type="term" value="F:aspartate carbamoyltransferase activity"/>
    <property type="evidence" value="ECO:0007669"/>
    <property type="project" value="UniProtKB-UniRule"/>
</dbReference>
<dbReference type="GO" id="GO:0006207">
    <property type="term" value="P:'de novo' pyrimidine nucleobase biosynthetic process"/>
    <property type="evidence" value="ECO:0007669"/>
    <property type="project" value="InterPro"/>
</dbReference>
<dbReference type="GO" id="GO:0044205">
    <property type="term" value="P:'de novo' UMP biosynthetic process"/>
    <property type="evidence" value="ECO:0007669"/>
    <property type="project" value="UniProtKB-UniRule"/>
</dbReference>
<dbReference type="GO" id="GO:0006520">
    <property type="term" value="P:amino acid metabolic process"/>
    <property type="evidence" value="ECO:0007669"/>
    <property type="project" value="InterPro"/>
</dbReference>
<dbReference type="FunFam" id="3.40.50.1370:FF:000007">
    <property type="entry name" value="Aspartate carbamoyltransferase"/>
    <property type="match status" value="1"/>
</dbReference>
<dbReference type="Gene3D" id="3.40.50.1370">
    <property type="entry name" value="Aspartate/ornithine carbamoyltransferase"/>
    <property type="match status" value="2"/>
</dbReference>
<dbReference type="HAMAP" id="MF_00001">
    <property type="entry name" value="Asp_carb_tr"/>
    <property type="match status" value="1"/>
</dbReference>
<dbReference type="InterPro" id="IPR006132">
    <property type="entry name" value="Asp/Orn_carbamoyltranf_P-bd"/>
</dbReference>
<dbReference type="InterPro" id="IPR006130">
    <property type="entry name" value="Asp/Orn_carbamoylTrfase"/>
</dbReference>
<dbReference type="InterPro" id="IPR036901">
    <property type="entry name" value="Asp/Orn_carbamoylTrfase_sf"/>
</dbReference>
<dbReference type="InterPro" id="IPR002082">
    <property type="entry name" value="Asp_carbamoyltransf"/>
</dbReference>
<dbReference type="InterPro" id="IPR006131">
    <property type="entry name" value="Asp_carbamoyltransf_Asp/Orn-bd"/>
</dbReference>
<dbReference type="NCBIfam" id="TIGR00670">
    <property type="entry name" value="asp_carb_tr"/>
    <property type="match status" value="1"/>
</dbReference>
<dbReference type="NCBIfam" id="NF002032">
    <property type="entry name" value="PRK00856.1"/>
    <property type="match status" value="1"/>
</dbReference>
<dbReference type="PANTHER" id="PTHR45753:SF6">
    <property type="entry name" value="ASPARTATE CARBAMOYLTRANSFERASE"/>
    <property type="match status" value="1"/>
</dbReference>
<dbReference type="PANTHER" id="PTHR45753">
    <property type="entry name" value="ORNITHINE CARBAMOYLTRANSFERASE, MITOCHONDRIAL"/>
    <property type="match status" value="1"/>
</dbReference>
<dbReference type="Pfam" id="PF00185">
    <property type="entry name" value="OTCace"/>
    <property type="match status" value="1"/>
</dbReference>
<dbReference type="Pfam" id="PF02729">
    <property type="entry name" value="OTCace_N"/>
    <property type="match status" value="1"/>
</dbReference>
<dbReference type="PRINTS" id="PR00100">
    <property type="entry name" value="AOTCASE"/>
</dbReference>
<dbReference type="PRINTS" id="PR00101">
    <property type="entry name" value="ATCASE"/>
</dbReference>
<dbReference type="SUPFAM" id="SSF53671">
    <property type="entry name" value="Aspartate/ornithine carbamoyltransferase"/>
    <property type="match status" value="1"/>
</dbReference>
<dbReference type="PROSITE" id="PS00097">
    <property type="entry name" value="CARBAMOYLTRANSFERASE"/>
    <property type="match status" value="1"/>
</dbReference>
<name>PYRB_RHIR8</name>
<keyword id="KW-0665">Pyrimidine biosynthesis</keyword>
<keyword id="KW-0808">Transferase</keyword>
<feature type="chain" id="PRO_1000191896" description="Aspartate carbamoyltransferase catalytic subunit">
    <location>
        <begin position="1"/>
        <end position="318"/>
    </location>
</feature>
<feature type="binding site" evidence="1">
    <location>
        <position position="59"/>
    </location>
    <ligand>
        <name>carbamoyl phosphate</name>
        <dbReference type="ChEBI" id="CHEBI:58228"/>
    </ligand>
</feature>
<feature type="binding site" evidence="1">
    <location>
        <position position="60"/>
    </location>
    <ligand>
        <name>carbamoyl phosphate</name>
        <dbReference type="ChEBI" id="CHEBI:58228"/>
    </ligand>
</feature>
<feature type="binding site" evidence="1">
    <location>
        <position position="87"/>
    </location>
    <ligand>
        <name>L-aspartate</name>
        <dbReference type="ChEBI" id="CHEBI:29991"/>
    </ligand>
</feature>
<feature type="binding site" evidence="1">
    <location>
        <position position="109"/>
    </location>
    <ligand>
        <name>carbamoyl phosphate</name>
        <dbReference type="ChEBI" id="CHEBI:58228"/>
    </ligand>
</feature>
<feature type="binding site" evidence="1">
    <location>
        <position position="137"/>
    </location>
    <ligand>
        <name>carbamoyl phosphate</name>
        <dbReference type="ChEBI" id="CHEBI:58228"/>
    </ligand>
</feature>
<feature type="binding site" evidence="1">
    <location>
        <position position="140"/>
    </location>
    <ligand>
        <name>carbamoyl phosphate</name>
        <dbReference type="ChEBI" id="CHEBI:58228"/>
    </ligand>
</feature>
<feature type="binding site" evidence="1">
    <location>
        <position position="170"/>
    </location>
    <ligand>
        <name>L-aspartate</name>
        <dbReference type="ChEBI" id="CHEBI:29991"/>
    </ligand>
</feature>
<feature type="binding site" evidence="1">
    <location>
        <position position="224"/>
    </location>
    <ligand>
        <name>L-aspartate</name>
        <dbReference type="ChEBI" id="CHEBI:29991"/>
    </ligand>
</feature>
<feature type="binding site" evidence="1">
    <location>
        <position position="265"/>
    </location>
    <ligand>
        <name>carbamoyl phosphate</name>
        <dbReference type="ChEBI" id="CHEBI:58228"/>
    </ligand>
</feature>
<feature type="binding site" evidence="1">
    <location>
        <position position="266"/>
    </location>
    <ligand>
        <name>carbamoyl phosphate</name>
        <dbReference type="ChEBI" id="CHEBI:58228"/>
    </ligand>
</feature>
<gene>
    <name evidence="1" type="primary">pyrB</name>
    <name type="ordered locus">Arad_1897</name>
</gene>